<sequence>MSWIDRIFSKNTTSNSKKSNVPEGVWTKCTSCEQVLYRDELKRHLEVCPKCGHHMRIDARERLVALLDKDSIVEIAADLEPKDILKFRDLKKYKDRLSAAQKETGEKDALITVSATLYGMPIVVAALNFSFMGGSMGSVVGSKFVQAAEKAIELHCPLVCFSASGGARMQEALFSLMQMAKTSAVLAKMKEKGVPFISVLTDPTLGGVSASFAMLGDINIAEPKALIGFAGPRVIEQTVREKLPEGFQRSEFLLEHGAIDMIVKRSEMRETLANLLSKLMNMPSPFVEPELIQEKSDDV</sequence>
<protein>
    <recommendedName>
        <fullName evidence="1">Acetyl-coenzyme A carboxylase carboxyl transferase subunit beta</fullName>
        <shortName evidence="1">ACCase subunit beta</shortName>
        <shortName evidence="1">Acetyl-CoA carboxylase carboxyltransferase subunit beta</shortName>
        <ecNumber evidence="1">2.1.3.15</ecNumber>
    </recommendedName>
</protein>
<dbReference type="EC" id="2.1.3.15" evidence="1"/>
<dbReference type="EMBL" id="CP000947">
    <property type="protein sequence ID" value="ACA31097.1"/>
    <property type="molecule type" value="Genomic_DNA"/>
</dbReference>
<dbReference type="RefSeq" id="WP_011609034.1">
    <property type="nucleotide sequence ID" value="NC_010519.1"/>
</dbReference>
<dbReference type="SMR" id="B0UU81"/>
<dbReference type="STRING" id="228400.HSM_1360"/>
<dbReference type="GeneID" id="31487658"/>
<dbReference type="KEGG" id="hsm:HSM_1360"/>
<dbReference type="HOGENOM" id="CLU_015486_1_0_6"/>
<dbReference type="UniPathway" id="UPA00655">
    <property type="reaction ID" value="UER00711"/>
</dbReference>
<dbReference type="GO" id="GO:0009329">
    <property type="term" value="C:acetate CoA-transferase complex"/>
    <property type="evidence" value="ECO:0007669"/>
    <property type="project" value="TreeGrafter"/>
</dbReference>
<dbReference type="GO" id="GO:0003989">
    <property type="term" value="F:acetyl-CoA carboxylase activity"/>
    <property type="evidence" value="ECO:0007669"/>
    <property type="project" value="InterPro"/>
</dbReference>
<dbReference type="GO" id="GO:0005524">
    <property type="term" value="F:ATP binding"/>
    <property type="evidence" value="ECO:0007669"/>
    <property type="project" value="UniProtKB-KW"/>
</dbReference>
<dbReference type="GO" id="GO:0016743">
    <property type="term" value="F:carboxyl- or carbamoyltransferase activity"/>
    <property type="evidence" value="ECO:0007669"/>
    <property type="project" value="UniProtKB-UniRule"/>
</dbReference>
<dbReference type="GO" id="GO:0008270">
    <property type="term" value="F:zinc ion binding"/>
    <property type="evidence" value="ECO:0007669"/>
    <property type="project" value="UniProtKB-UniRule"/>
</dbReference>
<dbReference type="GO" id="GO:0006633">
    <property type="term" value="P:fatty acid biosynthetic process"/>
    <property type="evidence" value="ECO:0007669"/>
    <property type="project" value="UniProtKB-KW"/>
</dbReference>
<dbReference type="GO" id="GO:2001295">
    <property type="term" value="P:malonyl-CoA biosynthetic process"/>
    <property type="evidence" value="ECO:0007669"/>
    <property type="project" value="UniProtKB-UniRule"/>
</dbReference>
<dbReference type="Gene3D" id="3.90.226.10">
    <property type="entry name" value="2-enoyl-CoA Hydratase, Chain A, domain 1"/>
    <property type="match status" value="1"/>
</dbReference>
<dbReference type="HAMAP" id="MF_01395">
    <property type="entry name" value="AcetylCoA_CT_beta"/>
    <property type="match status" value="1"/>
</dbReference>
<dbReference type="InterPro" id="IPR034733">
    <property type="entry name" value="AcCoA_carboxyl_beta"/>
</dbReference>
<dbReference type="InterPro" id="IPR000438">
    <property type="entry name" value="Acetyl_CoA_COase_Trfase_b_su"/>
</dbReference>
<dbReference type="InterPro" id="IPR029045">
    <property type="entry name" value="ClpP/crotonase-like_dom_sf"/>
</dbReference>
<dbReference type="InterPro" id="IPR011762">
    <property type="entry name" value="COA_CT_N"/>
</dbReference>
<dbReference type="InterPro" id="IPR041010">
    <property type="entry name" value="Znf-ACC"/>
</dbReference>
<dbReference type="NCBIfam" id="TIGR00515">
    <property type="entry name" value="accD"/>
    <property type="match status" value="1"/>
</dbReference>
<dbReference type="PANTHER" id="PTHR42995">
    <property type="entry name" value="ACETYL-COENZYME A CARBOXYLASE CARBOXYL TRANSFERASE SUBUNIT BETA, CHLOROPLASTIC"/>
    <property type="match status" value="1"/>
</dbReference>
<dbReference type="PANTHER" id="PTHR42995:SF5">
    <property type="entry name" value="ACETYL-COENZYME A CARBOXYLASE CARBOXYL TRANSFERASE SUBUNIT BETA, CHLOROPLASTIC"/>
    <property type="match status" value="1"/>
</dbReference>
<dbReference type="Pfam" id="PF01039">
    <property type="entry name" value="Carboxyl_trans"/>
    <property type="match status" value="1"/>
</dbReference>
<dbReference type="Pfam" id="PF17848">
    <property type="entry name" value="Zn_ribbon_ACC"/>
    <property type="match status" value="1"/>
</dbReference>
<dbReference type="PRINTS" id="PR01070">
    <property type="entry name" value="ACCCTRFRASEB"/>
</dbReference>
<dbReference type="SUPFAM" id="SSF52096">
    <property type="entry name" value="ClpP/crotonase"/>
    <property type="match status" value="1"/>
</dbReference>
<dbReference type="PROSITE" id="PS50980">
    <property type="entry name" value="COA_CT_NTER"/>
    <property type="match status" value="1"/>
</dbReference>
<comment type="function">
    <text evidence="1">Component of the acetyl coenzyme A carboxylase (ACC) complex. Biotin carboxylase (BC) catalyzes the carboxylation of biotin on its carrier protein (BCCP) and then the CO(2) group is transferred by the transcarboxylase to acetyl-CoA to form malonyl-CoA.</text>
</comment>
<comment type="catalytic activity">
    <reaction evidence="1">
        <text>N(6)-carboxybiotinyl-L-lysyl-[protein] + acetyl-CoA = N(6)-biotinyl-L-lysyl-[protein] + malonyl-CoA</text>
        <dbReference type="Rhea" id="RHEA:54728"/>
        <dbReference type="Rhea" id="RHEA-COMP:10505"/>
        <dbReference type="Rhea" id="RHEA-COMP:10506"/>
        <dbReference type="ChEBI" id="CHEBI:57288"/>
        <dbReference type="ChEBI" id="CHEBI:57384"/>
        <dbReference type="ChEBI" id="CHEBI:83144"/>
        <dbReference type="ChEBI" id="CHEBI:83145"/>
        <dbReference type="EC" id="2.1.3.15"/>
    </reaction>
</comment>
<comment type="cofactor">
    <cofactor evidence="1">
        <name>Zn(2+)</name>
        <dbReference type="ChEBI" id="CHEBI:29105"/>
    </cofactor>
    <text evidence="1">Binds 1 zinc ion per subunit.</text>
</comment>
<comment type="pathway">
    <text evidence="1">Lipid metabolism; malonyl-CoA biosynthesis; malonyl-CoA from acetyl-CoA: step 1/1.</text>
</comment>
<comment type="subunit">
    <text evidence="1">Acetyl-CoA carboxylase is a heterohexamer composed of biotin carboxyl carrier protein (AccB), biotin carboxylase (AccC) and two subunits each of ACCase subunit alpha (AccA) and ACCase subunit beta (AccD).</text>
</comment>
<comment type="subcellular location">
    <subcellularLocation>
        <location evidence="1">Cytoplasm</location>
    </subcellularLocation>
</comment>
<comment type="similarity">
    <text evidence="1">Belongs to the AccD/PCCB family.</text>
</comment>
<gene>
    <name evidence="1" type="primary">accD</name>
    <name type="ordered locus">HSM_1360</name>
</gene>
<proteinExistence type="inferred from homology"/>
<keyword id="KW-0067">ATP-binding</keyword>
<keyword id="KW-0963">Cytoplasm</keyword>
<keyword id="KW-0275">Fatty acid biosynthesis</keyword>
<keyword id="KW-0276">Fatty acid metabolism</keyword>
<keyword id="KW-0444">Lipid biosynthesis</keyword>
<keyword id="KW-0443">Lipid metabolism</keyword>
<keyword id="KW-0479">Metal-binding</keyword>
<keyword id="KW-0547">Nucleotide-binding</keyword>
<keyword id="KW-0808">Transferase</keyword>
<keyword id="KW-0862">Zinc</keyword>
<keyword id="KW-0863">Zinc-finger</keyword>
<name>ACCD_HISS2</name>
<accession>B0UU81</accession>
<reference key="1">
    <citation type="submission" date="2008-02" db="EMBL/GenBank/DDBJ databases">
        <title>Complete sequence of Haemophilus somnus 2336.</title>
        <authorList>
            <consortium name="US DOE Joint Genome Institute"/>
            <person name="Siddaramappa S."/>
            <person name="Duncan A.J."/>
            <person name="Challacombe J.F."/>
            <person name="Rainey D."/>
            <person name="Gillaspy A.F."/>
            <person name="Carson M."/>
            <person name="Gipson J."/>
            <person name="Gipson M."/>
            <person name="Bruce D."/>
            <person name="Detter J.C."/>
            <person name="Han C.S."/>
            <person name="Land M."/>
            <person name="Tapia R."/>
            <person name="Thompson L.S."/>
            <person name="Orvis J."/>
            <person name="Zaitshik J."/>
            <person name="Barnes G."/>
            <person name="Brettin T.S."/>
            <person name="Dyer D.W."/>
            <person name="Inzana T.J."/>
        </authorList>
    </citation>
    <scope>NUCLEOTIDE SEQUENCE [LARGE SCALE GENOMIC DNA]</scope>
    <source>
        <strain>2336</strain>
    </source>
</reference>
<feature type="chain" id="PRO_0000359001" description="Acetyl-coenzyme A carboxylase carboxyl transferase subunit beta">
    <location>
        <begin position="1"/>
        <end position="299"/>
    </location>
</feature>
<feature type="domain" description="CoA carboxyltransferase N-terminal" evidence="2">
    <location>
        <begin position="25"/>
        <end position="294"/>
    </location>
</feature>
<feature type="zinc finger region" description="C4-type" evidence="1">
    <location>
        <begin position="29"/>
        <end position="51"/>
    </location>
</feature>
<feature type="binding site" evidence="1">
    <location>
        <position position="29"/>
    </location>
    <ligand>
        <name>Zn(2+)</name>
        <dbReference type="ChEBI" id="CHEBI:29105"/>
    </ligand>
</feature>
<feature type="binding site" evidence="1">
    <location>
        <position position="32"/>
    </location>
    <ligand>
        <name>Zn(2+)</name>
        <dbReference type="ChEBI" id="CHEBI:29105"/>
    </ligand>
</feature>
<feature type="binding site" evidence="1">
    <location>
        <position position="48"/>
    </location>
    <ligand>
        <name>Zn(2+)</name>
        <dbReference type="ChEBI" id="CHEBI:29105"/>
    </ligand>
</feature>
<feature type="binding site" evidence="1">
    <location>
        <position position="51"/>
    </location>
    <ligand>
        <name>Zn(2+)</name>
        <dbReference type="ChEBI" id="CHEBI:29105"/>
    </ligand>
</feature>
<organism>
    <name type="scientific">Histophilus somni (strain 2336)</name>
    <name type="common">Haemophilus somnus</name>
    <dbReference type="NCBI Taxonomy" id="228400"/>
    <lineage>
        <taxon>Bacteria</taxon>
        <taxon>Pseudomonadati</taxon>
        <taxon>Pseudomonadota</taxon>
        <taxon>Gammaproteobacteria</taxon>
        <taxon>Pasteurellales</taxon>
        <taxon>Pasteurellaceae</taxon>
        <taxon>Histophilus</taxon>
    </lineage>
</organism>
<evidence type="ECO:0000255" key="1">
    <source>
        <dbReference type="HAMAP-Rule" id="MF_01395"/>
    </source>
</evidence>
<evidence type="ECO:0000255" key="2">
    <source>
        <dbReference type="PROSITE-ProRule" id="PRU01136"/>
    </source>
</evidence>